<feature type="chain" id="PRO_1000144303" description="Large ribosomal subunit protein uL14">
    <location>
        <begin position="1"/>
        <end position="122"/>
    </location>
</feature>
<gene>
    <name evidence="1" type="primary">rplN</name>
    <name type="ordered locus">NMCC_1995a</name>
</gene>
<evidence type="ECO:0000255" key="1">
    <source>
        <dbReference type="HAMAP-Rule" id="MF_01367"/>
    </source>
</evidence>
<evidence type="ECO:0000305" key="2"/>
<proteinExistence type="inferred from homology"/>
<protein>
    <recommendedName>
        <fullName evidence="1">Large ribosomal subunit protein uL14</fullName>
    </recommendedName>
    <alternativeName>
        <fullName evidence="2">50S ribosomal protein L14</fullName>
    </alternativeName>
</protein>
<dbReference type="EMBL" id="CP000381">
    <property type="protein sequence ID" value="ABX74242.1"/>
    <property type="molecule type" value="Genomic_DNA"/>
</dbReference>
<dbReference type="RefSeq" id="WP_002215434.1">
    <property type="nucleotide sequence ID" value="NC_010120.1"/>
</dbReference>
<dbReference type="SMR" id="A9M3V6"/>
<dbReference type="GeneID" id="94582047"/>
<dbReference type="KEGG" id="nmn:NMCC_1995a"/>
<dbReference type="HOGENOM" id="CLU_095071_2_1_4"/>
<dbReference type="Proteomes" id="UP000001177">
    <property type="component" value="Chromosome"/>
</dbReference>
<dbReference type="GO" id="GO:0022625">
    <property type="term" value="C:cytosolic large ribosomal subunit"/>
    <property type="evidence" value="ECO:0007669"/>
    <property type="project" value="TreeGrafter"/>
</dbReference>
<dbReference type="GO" id="GO:0070180">
    <property type="term" value="F:large ribosomal subunit rRNA binding"/>
    <property type="evidence" value="ECO:0007669"/>
    <property type="project" value="TreeGrafter"/>
</dbReference>
<dbReference type="GO" id="GO:0003735">
    <property type="term" value="F:structural constituent of ribosome"/>
    <property type="evidence" value="ECO:0007669"/>
    <property type="project" value="InterPro"/>
</dbReference>
<dbReference type="GO" id="GO:0006412">
    <property type="term" value="P:translation"/>
    <property type="evidence" value="ECO:0007669"/>
    <property type="project" value="UniProtKB-UniRule"/>
</dbReference>
<dbReference type="CDD" id="cd00337">
    <property type="entry name" value="Ribosomal_uL14"/>
    <property type="match status" value="1"/>
</dbReference>
<dbReference type="FunFam" id="2.40.150.20:FF:000001">
    <property type="entry name" value="50S ribosomal protein L14"/>
    <property type="match status" value="1"/>
</dbReference>
<dbReference type="Gene3D" id="2.40.150.20">
    <property type="entry name" value="Ribosomal protein L14"/>
    <property type="match status" value="1"/>
</dbReference>
<dbReference type="HAMAP" id="MF_01367">
    <property type="entry name" value="Ribosomal_uL14"/>
    <property type="match status" value="1"/>
</dbReference>
<dbReference type="InterPro" id="IPR000218">
    <property type="entry name" value="Ribosomal_uL14"/>
</dbReference>
<dbReference type="InterPro" id="IPR005745">
    <property type="entry name" value="Ribosomal_uL14_bac-type"/>
</dbReference>
<dbReference type="InterPro" id="IPR019972">
    <property type="entry name" value="Ribosomal_uL14_CS"/>
</dbReference>
<dbReference type="InterPro" id="IPR036853">
    <property type="entry name" value="Ribosomal_uL14_sf"/>
</dbReference>
<dbReference type="NCBIfam" id="TIGR01067">
    <property type="entry name" value="rplN_bact"/>
    <property type="match status" value="1"/>
</dbReference>
<dbReference type="PANTHER" id="PTHR11761">
    <property type="entry name" value="50S/60S RIBOSOMAL PROTEIN L14/L23"/>
    <property type="match status" value="1"/>
</dbReference>
<dbReference type="PANTHER" id="PTHR11761:SF3">
    <property type="entry name" value="LARGE RIBOSOMAL SUBUNIT PROTEIN UL14M"/>
    <property type="match status" value="1"/>
</dbReference>
<dbReference type="Pfam" id="PF00238">
    <property type="entry name" value="Ribosomal_L14"/>
    <property type="match status" value="1"/>
</dbReference>
<dbReference type="SMART" id="SM01374">
    <property type="entry name" value="Ribosomal_L14"/>
    <property type="match status" value="1"/>
</dbReference>
<dbReference type="SUPFAM" id="SSF50193">
    <property type="entry name" value="Ribosomal protein L14"/>
    <property type="match status" value="1"/>
</dbReference>
<dbReference type="PROSITE" id="PS00049">
    <property type="entry name" value="RIBOSOMAL_L14"/>
    <property type="match status" value="1"/>
</dbReference>
<reference key="1">
    <citation type="journal article" date="2008" name="Genomics">
        <title>Characterization of ST-4821 complex, a unique Neisseria meningitidis clone.</title>
        <authorList>
            <person name="Peng J."/>
            <person name="Yang L."/>
            <person name="Yang F."/>
            <person name="Yang J."/>
            <person name="Yan Y."/>
            <person name="Nie H."/>
            <person name="Zhang X."/>
            <person name="Xiong Z."/>
            <person name="Jiang Y."/>
            <person name="Cheng F."/>
            <person name="Xu X."/>
            <person name="Chen S."/>
            <person name="Sun L."/>
            <person name="Li W."/>
            <person name="Shen Y."/>
            <person name="Shao Z."/>
            <person name="Liang X."/>
            <person name="Xu J."/>
            <person name="Jin Q."/>
        </authorList>
    </citation>
    <scope>NUCLEOTIDE SEQUENCE [LARGE SCALE GENOMIC DNA]</scope>
    <source>
        <strain>053442</strain>
    </source>
</reference>
<keyword id="KW-0687">Ribonucleoprotein</keyword>
<keyword id="KW-0689">Ribosomal protein</keyword>
<keyword id="KW-0694">RNA-binding</keyword>
<keyword id="KW-0699">rRNA-binding</keyword>
<sequence>MIQMQTILDVADNSGARRVMCIKVLGGSKRRYASVGDIIKVAVKDAAPRGRVKKGDVYNAVVVRTAKGVRRPDGALIKFDNNAAVLLNNKLEPLGTRIFGPVTRELRTERFMKIVSLAPEVL</sequence>
<organism>
    <name type="scientific">Neisseria meningitidis serogroup C (strain 053442)</name>
    <dbReference type="NCBI Taxonomy" id="374833"/>
    <lineage>
        <taxon>Bacteria</taxon>
        <taxon>Pseudomonadati</taxon>
        <taxon>Pseudomonadota</taxon>
        <taxon>Betaproteobacteria</taxon>
        <taxon>Neisseriales</taxon>
        <taxon>Neisseriaceae</taxon>
        <taxon>Neisseria</taxon>
    </lineage>
</organism>
<name>RL14_NEIM0</name>
<accession>A9M3V6</accession>
<comment type="function">
    <text evidence="1">Binds to 23S rRNA. Forms part of two intersubunit bridges in the 70S ribosome.</text>
</comment>
<comment type="subunit">
    <text evidence="1">Part of the 50S ribosomal subunit. Forms a cluster with proteins L3 and L19. In the 70S ribosome, L14 and L19 interact and together make contacts with the 16S rRNA in bridges B5 and B8.</text>
</comment>
<comment type="similarity">
    <text evidence="1">Belongs to the universal ribosomal protein uL14 family.</text>
</comment>